<sequence>MDKYVQIGLITKPHGLRGEVCVVSYADSPFLMQERIFLQAGKGPCVPYRVRSSRRHSGTELLLLEGIDDRNAAEKLRQHKVLIPHAELPELEDDEVYIEDILGFTVVLDEDGSTLGTLTAFSAPTPEQEVWEITTPDGKEVLFPAAEEFVAEIDVDSETIRITPPPGLLEIYLSGS</sequence>
<keyword id="KW-0143">Chaperone</keyword>
<keyword id="KW-0963">Cytoplasm</keyword>
<keyword id="KW-1185">Reference proteome</keyword>
<keyword id="KW-0690">Ribosome biogenesis</keyword>
<keyword id="KW-0698">rRNA processing</keyword>
<accession>Q313J8</accession>
<proteinExistence type="inferred from homology"/>
<evidence type="ECO:0000255" key="1">
    <source>
        <dbReference type="HAMAP-Rule" id="MF_00014"/>
    </source>
</evidence>
<protein>
    <recommendedName>
        <fullName evidence="1">Ribosome maturation factor RimM</fullName>
    </recommendedName>
</protein>
<name>RIMM_OLEA2</name>
<gene>
    <name evidence="1" type="primary">rimM</name>
    <name type="ordered locus">Dde_1097</name>
</gene>
<comment type="function">
    <text evidence="1">An accessory protein needed during the final step in the assembly of 30S ribosomal subunit, possibly for assembly of the head region. Essential for efficient processing of 16S rRNA. May be needed both before and after RbfA during the maturation of 16S rRNA. It has affinity for free ribosomal 30S subunits but not for 70S ribosomes.</text>
</comment>
<comment type="subunit">
    <text evidence="1">Binds ribosomal protein uS19.</text>
</comment>
<comment type="subcellular location">
    <subcellularLocation>
        <location evidence="1">Cytoplasm</location>
    </subcellularLocation>
</comment>
<comment type="domain">
    <text evidence="1">The PRC barrel domain binds ribosomal protein uS19.</text>
</comment>
<comment type="similarity">
    <text evidence="1">Belongs to the RimM family.</text>
</comment>
<organism>
    <name type="scientific">Oleidesulfovibrio alaskensis (strain ATCC BAA-1058 / DSM 17464 / G20)</name>
    <name type="common">Desulfovibrio alaskensis</name>
    <dbReference type="NCBI Taxonomy" id="207559"/>
    <lineage>
        <taxon>Bacteria</taxon>
        <taxon>Pseudomonadati</taxon>
        <taxon>Thermodesulfobacteriota</taxon>
        <taxon>Desulfovibrionia</taxon>
        <taxon>Desulfovibrionales</taxon>
        <taxon>Desulfovibrionaceae</taxon>
        <taxon>Oleidesulfovibrio</taxon>
    </lineage>
</organism>
<reference key="1">
    <citation type="journal article" date="2011" name="J. Bacteriol.">
        <title>Complete genome sequence and updated annotation of Desulfovibrio alaskensis G20.</title>
        <authorList>
            <person name="Hauser L.J."/>
            <person name="Land M.L."/>
            <person name="Brown S.D."/>
            <person name="Larimer F."/>
            <person name="Keller K.L."/>
            <person name="Rapp-Giles B.J."/>
            <person name="Price M.N."/>
            <person name="Lin M."/>
            <person name="Bruce D.C."/>
            <person name="Detter J.C."/>
            <person name="Tapia R."/>
            <person name="Han C.S."/>
            <person name="Goodwin L.A."/>
            <person name="Cheng J.F."/>
            <person name="Pitluck S."/>
            <person name="Copeland A."/>
            <person name="Lucas S."/>
            <person name="Nolan M."/>
            <person name="Lapidus A.L."/>
            <person name="Palumbo A.V."/>
            <person name="Wall J.D."/>
        </authorList>
    </citation>
    <scope>NUCLEOTIDE SEQUENCE [LARGE SCALE GENOMIC DNA]</scope>
    <source>
        <strain>ATCC BAA-1058 / DSM 17464 / G20</strain>
    </source>
</reference>
<feature type="chain" id="PRO_0000244126" description="Ribosome maturation factor RimM">
    <location>
        <begin position="1"/>
        <end position="176"/>
    </location>
</feature>
<feature type="domain" description="PRC barrel" evidence="1">
    <location>
        <begin position="93"/>
        <end position="168"/>
    </location>
</feature>
<dbReference type="EMBL" id="CP000112">
    <property type="protein sequence ID" value="ABB37898.1"/>
    <property type="molecule type" value="Genomic_DNA"/>
</dbReference>
<dbReference type="RefSeq" id="WP_011367128.1">
    <property type="nucleotide sequence ID" value="NC_007519.1"/>
</dbReference>
<dbReference type="SMR" id="Q313J8"/>
<dbReference type="STRING" id="207559.Dde_1097"/>
<dbReference type="KEGG" id="dde:Dde_1097"/>
<dbReference type="eggNOG" id="COG0806">
    <property type="taxonomic scope" value="Bacteria"/>
</dbReference>
<dbReference type="HOGENOM" id="CLU_077636_3_2_7"/>
<dbReference type="Proteomes" id="UP000002710">
    <property type="component" value="Chromosome"/>
</dbReference>
<dbReference type="GO" id="GO:0005737">
    <property type="term" value="C:cytoplasm"/>
    <property type="evidence" value="ECO:0007669"/>
    <property type="project" value="UniProtKB-SubCell"/>
</dbReference>
<dbReference type="GO" id="GO:0005840">
    <property type="term" value="C:ribosome"/>
    <property type="evidence" value="ECO:0007669"/>
    <property type="project" value="InterPro"/>
</dbReference>
<dbReference type="GO" id="GO:0043022">
    <property type="term" value="F:ribosome binding"/>
    <property type="evidence" value="ECO:0007669"/>
    <property type="project" value="InterPro"/>
</dbReference>
<dbReference type="GO" id="GO:0042274">
    <property type="term" value="P:ribosomal small subunit biogenesis"/>
    <property type="evidence" value="ECO:0007669"/>
    <property type="project" value="UniProtKB-UniRule"/>
</dbReference>
<dbReference type="GO" id="GO:0006364">
    <property type="term" value="P:rRNA processing"/>
    <property type="evidence" value="ECO:0007669"/>
    <property type="project" value="UniProtKB-UniRule"/>
</dbReference>
<dbReference type="Gene3D" id="2.30.30.240">
    <property type="entry name" value="PRC-barrel domain"/>
    <property type="match status" value="1"/>
</dbReference>
<dbReference type="Gene3D" id="2.40.30.60">
    <property type="entry name" value="RimM"/>
    <property type="match status" value="1"/>
</dbReference>
<dbReference type="HAMAP" id="MF_00014">
    <property type="entry name" value="Ribosome_mat_RimM"/>
    <property type="match status" value="1"/>
</dbReference>
<dbReference type="InterPro" id="IPR011033">
    <property type="entry name" value="PRC_barrel-like_sf"/>
</dbReference>
<dbReference type="InterPro" id="IPR056792">
    <property type="entry name" value="PRC_RimM"/>
</dbReference>
<dbReference type="InterPro" id="IPR011961">
    <property type="entry name" value="RimM"/>
</dbReference>
<dbReference type="InterPro" id="IPR002676">
    <property type="entry name" value="RimM_N"/>
</dbReference>
<dbReference type="InterPro" id="IPR036976">
    <property type="entry name" value="RimM_N_sf"/>
</dbReference>
<dbReference type="InterPro" id="IPR009000">
    <property type="entry name" value="Transl_B-barrel_sf"/>
</dbReference>
<dbReference type="NCBIfam" id="TIGR02273">
    <property type="entry name" value="16S_RimM"/>
    <property type="match status" value="1"/>
</dbReference>
<dbReference type="PANTHER" id="PTHR33692">
    <property type="entry name" value="RIBOSOME MATURATION FACTOR RIMM"/>
    <property type="match status" value="1"/>
</dbReference>
<dbReference type="PANTHER" id="PTHR33692:SF1">
    <property type="entry name" value="RIBOSOME MATURATION FACTOR RIMM"/>
    <property type="match status" value="1"/>
</dbReference>
<dbReference type="Pfam" id="PF24986">
    <property type="entry name" value="PRC_RimM"/>
    <property type="match status" value="1"/>
</dbReference>
<dbReference type="Pfam" id="PF01782">
    <property type="entry name" value="RimM"/>
    <property type="match status" value="1"/>
</dbReference>
<dbReference type="SUPFAM" id="SSF50346">
    <property type="entry name" value="PRC-barrel domain"/>
    <property type="match status" value="1"/>
</dbReference>
<dbReference type="SUPFAM" id="SSF50447">
    <property type="entry name" value="Translation proteins"/>
    <property type="match status" value="1"/>
</dbReference>